<accession>Q5LYH1</accession>
<evidence type="ECO:0000255" key="1">
    <source>
        <dbReference type="HAMAP-Rule" id="MF_00012"/>
    </source>
</evidence>
<sequence>MEENIVSENNMKHRSSVYDSMVKSPNRAMLRATGMTDDSFEKPIVGVISTWAENTPCNIHLHGFGQIAKEGVKDAGAWPVQFGTITVADGIAMGTPGMRFSLTSRDIIADSIEAAMGGHNVDAFVAIGGCDKNMPGSMIAIANMDIPAIFAYGGTIAPGNLNGKDIDLVSVFEGIGKWNHGDMTAEEVKNLECNACPGPGGCGGMYTANTMATAIEVMGMSLPGSSSHPAESAEKKADIEEAGRAVVKMLEMGLKPSDILTREAFEDAITVTMALGGSTNATLHLLAIAHAANVDLTLEDFNDFQERVPHLADLKPSGQYVFQDLYNVGGVPAVMKYLLKNGFLHGDRITCTGKTVAENLEAFDDLTPGQKVIMPLENPKRADGPLIILKGNLAPEGAVAKVSGVKVRNITGPAKVFDSEEDAIEAVLSDEIVDGDVVVVRFVGPKGGPGMPEMLSLSSMIVGKGQGDKVALLTDGRFSGGTYGLVVGHIAPEAQVGGPIAYLRTGDMVTVDQDTKEITMHVPDEELAKRKAETELPPLYSRGVLGKYAHIVSSASRGAVTDFWNMDKSGKA</sequence>
<proteinExistence type="inferred from homology"/>
<organism>
    <name type="scientific">Streptococcus thermophilus (strain CNRZ 1066)</name>
    <dbReference type="NCBI Taxonomy" id="299768"/>
    <lineage>
        <taxon>Bacteria</taxon>
        <taxon>Bacillati</taxon>
        <taxon>Bacillota</taxon>
        <taxon>Bacilli</taxon>
        <taxon>Lactobacillales</taxon>
        <taxon>Streptococcaceae</taxon>
        <taxon>Streptococcus</taxon>
    </lineage>
</organism>
<comment type="function">
    <text evidence="1">Functions in the biosynthesis of branched-chain amino acids. Catalyzes the dehydration of (2R,3R)-2,3-dihydroxy-3-methylpentanoate (2,3-dihydroxy-3-methylvalerate) into 2-oxo-3-methylpentanoate (2-oxo-3-methylvalerate) and of (2R)-2,3-dihydroxy-3-methylbutanoate (2,3-dihydroxyisovalerate) into 2-oxo-3-methylbutanoate (2-oxoisovalerate), the penultimate precursor to L-isoleucine and L-valine, respectively.</text>
</comment>
<comment type="catalytic activity">
    <reaction evidence="1">
        <text>(2R)-2,3-dihydroxy-3-methylbutanoate = 3-methyl-2-oxobutanoate + H2O</text>
        <dbReference type="Rhea" id="RHEA:24809"/>
        <dbReference type="ChEBI" id="CHEBI:11851"/>
        <dbReference type="ChEBI" id="CHEBI:15377"/>
        <dbReference type="ChEBI" id="CHEBI:49072"/>
        <dbReference type="EC" id="4.2.1.9"/>
    </reaction>
    <physiologicalReaction direction="left-to-right" evidence="1">
        <dbReference type="Rhea" id="RHEA:24810"/>
    </physiologicalReaction>
</comment>
<comment type="catalytic activity">
    <reaction evidence="1">
        <text>(2R,3R)-2,3-dihydroxy-3-methylpentanoate = (S)-3-methyl-2-oxopentanoate + H2O</text>
        <dbReference type="Rhea" id="RHEA:27694"/>
        <dbReference type="ChEBI" id="CHEBI:15377"/>
        <dbReference type="ChEBI" id="CHEBI:35146"/>
        <dbReference type="ChEBI" id="CHEBI:49258"/>
        <dbReference type="EC" id="4.2.1.9"/>
    </reaction>
    <physiologicalReaction direction="left-to-right" evidence="1">
        <dbReference type="Rhea" id="RHEA:27695"/>
    </physiologicalReaction>
</comment>
<comment type="cofactor">
    <cofactor evidence="1">
        <name>[2Fe-2S] cluster</name>
        <dbReference type="ChEBI" id="CHEBI:190135"/>
    </cofactor>
    <text evidence="1">Binds 1 [2Fe-2S] cluster per subunit. This cluster acts as a Lewis acid cofactor.</text>
</comment>
<comment type="cofactor">
    <cofactor evidence="1">
        <name>Mg(2+)</name>
        <dbReference type="ChEBI" id="CHEBI:18420"/>
    </cofactor>
</comment>
<comment type="pathway">
    <text evidence="1">Amino-acid biosynthesis; L-isoleucine biosynthesis; L-isoleucine from 2-oxobutanoate: step 3/4.</text>
</comment>
<comment type="pathway">
    <text evidence="1">Amino-acid biosynthesis; L-valine biosynthesis; L-valine from pyruvate: step 3/4.</text>
</comment>
<comment type="subunit">
    <text evidence="1">Homodimer.</text>
</comment>
<comment type="similarity">
    <text evidence="1">Belongs to the IlvD/Edd family.</text>
</comment>
<keyword id="KW-0001">2Fe-2S</keyword>
<keyword id="KW-0028">Amino-acid biosynthesis</keyword>
<keyword id="KW-0100">Branched-chain amino acid biosynthesis</keyword>
<keyword id="KW-0408">Iron</keyword>
<keyword id="KW-0411">Iron-sulfur</keyword>
<keyword id="KW-0456">Lyase</keyword>
<keyword id="KW-0460">Magnesium</keyword>
<keyword id="KW-0479">Metal-binding</keyword>
<protein>
    <recommendedName>
        <fullName evidence="1">Dihydroxy-acid dehydratase</fullName>
        <shortName evidence="1">DAD</shortName>
        <ecNumber evidence="1">4.2.1.9</ecNumber>
    </recommendedName>
</protein>
<feature type="chain" id="PRO_0000225429" description="Dihydroxy-acid dehydratase">
    <location>
        <begin position="1"/>
        <end position="572"/>
    </location>
</feature>
<feature type="active site" description="Proton acceptor" evidence="1">
    <location>
        <position position="479"/>
    </location>
</feature>
<feature type="binding site" evidence="1">
    <location>
        <position position="57"/>
    </location>
    <ligand>
        <name>[2Fe-2S] cluster</name>
        <dbReference type="ChEBI" id="CHEBI:190135"/>
    </ligand>
</feature>
<feature type="binding site" evidence="1">
    <location>
        <position position="89"/>
    </location>
    <ligand>
        <name>Mg(2+)</name>
        <dbReference type="ChEBI" id="CHEBI:18420"/>
    </ligand>
</feature>
<feature type="binding site" evidence="1">
    <location>
        <position position="130"/>
    </location>
    <ligand>
        <name>[2Fe-2S] cluster</name>
        <dbReference type="ChEBI" id="CHEBI:190135"/>
    </ligand>
</feature>
<feature type="binding site" evidence="1">
    <location>
        <position position="131"/>
    </location>
    <ligand>
        <name>Mg(2+)</name>
        <dbReference type="ChEBI" id="CHEBI:18420"/>
    </ligand>
</feature>
<feature type="binding site" description="via carbamate group" evidence="1">
    <location>
        <position position="132"/>
    </location>
    <ligand>
        <name>Mg(2+)</name>
        <dbReference type="ChEBI" id="CHEBI:18420"/>
    </ligand>
</feature>
<feature type="binding site" evidence="1">
    <location>
        <position position="202"/>
    </location>
    <ligand>
        <name>[2Fe-2S] cluster</name>
        <dbReference type="ChEBI" id="CHEBI:190135"/>
    </ligand>
</feature>
<feature type="binding site" evidence="1">
    <location>
        <position position="453"/>
    </location>
    <ligand>
        <name>Mg(2+)</name>
        <dbReference type="ChEBI" id="CHEBI:18420"/>
    </ligand>
</feature>
<feature type="modified residue" description="N6-carboxylysine" evidence="1">
    <location>
        <position position="132"/>
    </location>
</feature>
<dbReference type="EC" id="4.2.1.9" evidence="1"/>
<dbReference type="EMBL" id="CP000024">
    <property type="protein sequence ID" value="AAV63134.1"/>
    <property type="molecule type" value="Genomic_DNA"/>
</dbReference>
<dbReference type="SMR" id="Q5LYH1"/>
<dbReference type="KEGG" id="stc:str1604"/>
<dbReference type="HOGENOM" id="CLU_014271_4_1_9"/>
<dbReference type="UniPathway" id="UPA00047">
    <property type="reaction ID" value="UER00057"/>
</dbReference>
<dbReference type="UniPathway" id="UPA00049">
    <property type="reaction ID" value="UER00061"/>
</dbReference>
<dbReference type="GO" id="GO:0051537">
    <property type="term" value="F:2 iron, 2 sulfur cluster binding"/>
    <property type="evidence" value="ECO:0007669"/>
    <property type="project" value="UniProtKB-UniRule"/>
</dbReference>
<dbReference type="GO" id="GO:0004160">
    <property type="term" value="F:dihydroxy-acid dehydratase activity"/>
    <property type="evidence" value="ECO:0007669"/>
    <property type="project" value="UniProtKB-UniRule"/>
</dbReference>
<dbReference type="GO" id="GO:0000287">
    <property type="term" value="F:magnesium ion binding"/>
    <property type="evidence" value="ECO:0007669"/>
    <property type="project" value="UniProtKB-UniRule"/>
</dbReference>
<dbReference type="GO" id="GO:0009097">
    <property type="term" value="P:isoleucine biosynthetic process"/>
    <property type="evidence" value="ECO:0007669"/>
    <property type="project" value="UniProtKB-UniRule"/>
</dbReference>
<dbReference type="GO" id="GO:0009099">
    <property type="term" value="P:L-valine biosynthetic process"/>
    <property type="evidence" value="ECO:0007669"/>
    <property type="project" value="UniProtKB-UniRule"/>
</dbReference>
<dbReference type="FunFam" id="3.50.30.80:FF:000001">
    <property type="entry name" value="Dihydroxy-acid dehydratase"/>
    <property type="match status" value="1"/>
</dbReference>
<dbReference type="Gene3D" id="3.50.30.80">
    <property type="entry name" value="IlvD/EDD C-terminal domain-like"/>
    <property type="match status" value="1"/>
</dbReference>
<dbReference type="HAMAP" id="MF_00012">
    <property type="entry name" value="IlvD"/>
    <property type="match status" value="1"/>
</dbReference>
<dbReference type="InterPro" id="IPR050165">
    <property type="entry name" value="DHAD_IlvD/Edd"/>
</dbReference>
<dbReference type="InterPro" id="IPR042096">
    <property type="entry name" value="Dihydro-acid_dehy_C"/>
</dbReference>
<dbReference type="InterPro" id="IPR004404">
    <property type="entry name" value="DihydroxyA_deHydtase"/>
</dbReference>
<dbReference type="InterPro" id="IPR020558">
    <property type="entry name" value="DiOHA_6PGluconate_deHydtase_CS"/>
</dbReference>
<dbReference type="InterPro" id="IPR056740">
    <property type="entry name" value="ILV_EDD_C"/>
</dbReference>
<dbReference type="InterPro" id="IPR000581">
    <property type="entry name" value="ILV_EDD_N"/>
</dbReference>
<dbReference type="InterPro" id="IPR037237">
    <property type="entry name" value="IlvD/EDD_N"/>
</dbReference>
<dbReference type="NCBIfam" id="TIGR00110">
    <property type="entry name" value="ilvD"/>
    <property type="match status" value="1"/>
</dbReference>
<dbReference type="NCBIfam" id="NF002068">
    <property type="entry name" value="PRK00911.1"/>
    <property type="match status" value="1"/>
</dbReference>
<dbReference type="PANTHER" id="PTHR21000">
    <property type="entry name" value="DIHYDROXY-ACID DEHYDRATASE DAD"/>
    <property type="match status" value="1"/>
</dbReference>
<dbReference type="PANTHER" id="PTHR21000:SF5">
    <property type="entry name" value="DIHYDROXY-ACID DEHYDRATASE, MITOCHONDRIAL"/>
    <property type="match status" value="1"/>
</dbReference>
<dbReference type="Pfam" id="PF24877">
    <property type="entry name" value="ILV_EDD_C"/>
    <property type="match status" value="1"/>
</dbReference>
<dbReference type="Pfam" id="PF00920">
    <property type="entry name" value="ILVD_EDD_N"/>
    <property type="match status" value="1"/>
</dbReference>
<dbReference type="SUPFAM" id="SSF143975">
    <property type="entry name" value="IlvD/EDD N-terminal domain-like"/>
    <property type="match status" value="1"/>
</dbReference>
<dbReference type="SUPFAM" id="SSF52016">
    <property type="entry name" value="LeuD/IlvD-like"/>
    <property type="match status" value="1"/>
</dbReference>
<dbReference type="PROSITE" id="PS00886">
    <property type="entry name" value="ILVD_EDD_1"/>
    <property type="match status" value="1"/>
</dbReference>
<dbReference type="PROSITE" id="PS00887">
    <property type="entry name" value="ILVD_EDD_2"/>
    <property type="match status" value="1"/>
</dbReference>
<name>ILVD_STRT1</name>
<gene>
    <name evidence="1" type="primary">ilvD</name>
    <name type="ordered locus">str1604</name>
</gene>
<reference key="1">
    <citation type="journal article" date="2004" name="Nat. Biotechnol.">
        <title>Complete sequence and comparative genome analysis of the dairy bacterium Streptococcus thermophilus.</title>
        <authorList>
            <person name="Bolotin A."/>
            <person name="Quinquis B."/>
            <person name="Renault P."/>
            <person name="Sorokin A."/>
            <person name="Ehrlich S.D."/>
            <person name="Kulakauskas S."/>
            <person name="Lapidus A."/>
            <person name="Goltsman E."/>
            <person name="Mazur M."/>
            <person name="Pusch G.D."/>
            <person name="Fonstein M."/>
            <person name="Overbeek R."/>
            <person name="Kyprides N."/>
            <person name="Purnelle B."/>
            <person name="Prozzi D."/>
            <person name="Ngui K."/>
            <person name="Masuy D."/>
            <person name="Hancy F."/>
            <person name="Burteau S."/>
            <person name="Boutry M."/>
            <person name="Delcour J."/>
            <person name="Goffeau A."/>
            <person name="Hols P."/>
        </authorList>
    </citation>
    <scope>NUCLEOTIDE SEQUENCE [LARGE SCALE GENOMIC DNA]</scope>
    <source>
        <strain>CNRZ 1066</strain>
    </source>
</reference>